<sequence>MSPFSSAFRPRRIAISALLLAIGALASGCSSIDRLSQIGEQPKLSAIDNPTAQPGYKPVQMPMPKPEVASYNPNSLWRSGSRAFFKDQRAHQIGDLLTVTVNITDKANIANETQRSRTAKEDSGITDFIGSQTVTQPLKVLPGRLLTTDSTSSADGKGSVNRQEALQTNVAAVVTQVLPNGNLVVEGKQEIRVNYEIRELVVAGIVRPEDIQSDNTIDSSKIAQARIAYGGRGQIMDVQQPRYGQQVMDVLLPF</sequence>
<proteinExistence type="inferred from homology"/>
<accession>Q89I09</accession>
<gene>
    <name type="primary">flgH1</name>
    <name type="ordered locus">blr5830</name>
</gene>
<organism>
    <name type="scientific">Bradyrhizobium diazoefficiens (strain JCM 10833 / BCRC 13528 / IAM 13628 / NBRC 14792 / USDA 110)</name>
    <dbReference type="NCBI Taxonomy" id="224911"/>
    <lineage>
        <taxon>Bacteria</taxon>
        <taxon>Pseudomonadati</taxon>
        <taxon>Pseudomonadota</taxon>
        <taxon>Alphaproteobacteria</taxon>
        <taxon>Hyphomicrobiales</taxon>
        <taxon>Nitrobacteraceae</taxon>
        <taxon>Bradyrhizobium</taxon>
    </lineage>
</organism>
<keyword id="KW-0975">Bacterial flagellum</keyword>
<keyword id="KW-0998">Cell outer membrane</keyword>
<keyword id="KW-0472">Membrane</keyword>
<keyword id="KW-1185">Reference proteome</keyword>
<keyword id="KW-0732">Signal</keyword>
<feature type="signal peptide" evidence="2">
    <location>
        <begin position="1"/>
        <end position="26"/>
    </location>
</feature>
<feature type="chain" id="PRO_0000009426" description="Flagellar L-ring protein 1">
    <location>
        <begin position="27"/>
        <end position="254"/>
    </location>
</feature>
<evidence type="ECO:0000250" key="1"/>
<evidence type="ECO:0000255" key="2"/>
<evidence type="ECO:0000305" key="3"/>
<reference key="1">
    <citation type="journal article" date="2002" name="DNA Res.">
        <title>Complete genomic sequence of nitrogen-fixing symbiotic bacterium Bradyrhizobium japonicum USDA110.</title>
        <authorList>
            <person name="Kaneko T."/>
            <person name="Nakamura Y."/>
            <person name="Sato S."/>
            <person name="Minamisawa K."/>
            <person name="Uchiumi T."/>
            <person name="Sasamoto S."/>
            <person name="Watanabe A."/>
            <person name="Idesawa K."/>
            <person name="Iriguchi M."/>
            <person name="Kawashima K."/>
            <person name="Kohara M."/>
            <person name="Matsumoto M."/>
            <person name="Shimpo S."/>
            <person name="Tsuruoka H."/>
            <person name="Wada T."/>
            <person name="Yamada M."/>
            <person name="Tabata S."/>
        </authorList>
    </citation>
    <scope>NUCLEOTIDE SEQUENCE [LARGE SCALE GENOMIC DNA]</scope>
    <source>
        <strain>JCM 10833 / BCRC 13528 / IAM 13628 / NBRC 14792 / USDA 110</strain>
    </source>
</reference>
<protein>
    <recommendedName>
        <fullName>Flagellar L-ring protein 1</fullName>
    </recommendedName>
    <alternativeName>
        <fullName>Basal body L-ring protein 1</fullName>
    </alternativeName>
</protein>
<comment type="function">
    <text evidence="1">Assembles around the rod to form the L-ring and probably protects the motor/basal body from shearing forces during rotation.</text>
</comment>
<comment type="subunit">
    <text evidence="1">The basal body constitutes a major portion of the flagellar organelle and consists of four rings (L,P,S, and M) mounted on a central rod.</text>
</comment>
<comment type="subcellular location">
    <subcellularLocation>
        <location evidence="1">Cell outer membrane</location>
    </subcellularLocation>
    <subcellularLocation>
        <location evidence="1">Bacterial flagellum basal body</location>
    </subcellularLocation>
</comment>
<comment type="similarity">
    <text evidence="3">Belongs to the FlgH family.</text>
</comment>
<dbReference type="EMBL" id="BA000040">
    <property type="protein sequence ID" value="BAC51095.1"/>
    <property type="molecule type" value="Genomic_DNA"/>
</dbReference>
<dbReference type="RefSeq" id="NP_772470.1">
    <property type="nucleotide sequence ID" value="NC_004463.1"/>
</dbReference>
<dbReference type="RefSeq" id="WP_011088573.1">
    <property type="nucleotide sequence ID" value="NC_004463.1"/>
</dbReference>
<dbReference type="SMR" id="Q89I09"/>
<dbReference type="FunCoup" id="Q89I09">
    <property type="interactions" value="119"/>
</dbReference>
<dbReference type="STRING" id="224911.AAV28_26685"/>
<dbReference type="EnsemblBacteria" id="BAC51095">
    <property type="protein sequence ID" value="BAC51095"/>
    <property type="gene ID" value="BAC51095"/>
</dbReference>
<dbReference type="GeneID" id="46492828"/>
<dbReference type="KEGG" id="bja:blr5830"/>
<dbReference type="PATRIC" id="fig|224911.44.peg.5776"/>
<dbReference type="eggNOG" id="COG2063">
    <property type="taxonomic scope" value="Bacteria"/>
</dbReference>
<dbReference type="HOGENOM" id="CLU_069313_1_2_5"/>
<dbReference type="InParanoid" id="Q89I09"/>
<dbReference type="OrthoDB" id="9789227at2"/>
<dbReference type="PhylomeDB" id="Q89I09"/>
<dbReference type="Proteomes" id="UP000002526">
    <property type="component" value="Chromosome"/>
</dbReference>
<dbReference type="GO" id="GO:0009427">
    <property type="term" value="C:bacterial-type flagellum basal body, distal rod, L ring"/>
    <property type="evidence" value="ECO:0007669"/>
    <property type="project" value="InterPro"/>
</dbReference>
<dbReference type="GO" id="GO:0009279">
    <property type="term" value="C:cell outer membrane"/>
    <property type="evidence" value="ECO:0007669"/>
    <property type="project" value="UniProtKB-SubCell"/>
</dbReference>
<dbReference type="GO" id="GO:0003774">
    <property type="term" value="F:cytoskeletal motor activity"/>
    <property type="evidence" value="ECO:0007669"/>
    <property type="project" value="InterPro"/>
</dbReference>
<dbReference type="GO" id="GO:0071973">
    <property type="term" value="P:bacterial-type flagellum-dependent cell motility"/>
    <property type="evidence" value="ECO:0007669"/>
    <property type="project" value="InterPro"/>
</dbReference>
<dbReference type="HAMAP" id="MF_00415">
    <property type="entry name" value="FlgH"/>
    <property type="match status" value="1"/>
</dbReference>
<dbReference type="InterPro" id="IPR000527">
    <property type="entry name" value="Flag_Lring"/>
</dbReference>
<dbReference type="NCBIfam" id="NF001305">
    <property type="entry name" value="PRK00249.1-5"/>
    <property type="match status" value="1"/>
</dbReference>
<dbReference type="PANTHER" id="PTHR34933">
    <property type="entry name" value="FLAGELLAR L-RING PROTEIN"/>
    <property type="match status" value="1"/>
</dbReference>
<dbReference type="PANTHER" id="PTHR34933:SF1">
    <property type="entry name" value="FLAGELLAR L-RING PROTEIN"/>
    <property type="match status" value="1"/>
</dbReference>
<dbReference type="Pfam" id="PF02107">
    <property type="entry name" value="FlgH"/>
    <property type="match status" value="1"/>
</dbReference>
<dbReference type="PRINTS" id="PR01008">
    <property type="entry name" value="FLGLRINGFLGH"/>
</dbReference>
<name>FLGH1_BRADU</name>